<protein>
    <recommendedName>
        <fullName evidence="1">Probable cell division protein WhiA</fullName>
    </recommendedName>
</protein>
<name>WHIA_EXIS2</name>
<organism>
    <name type="scientific">Exiguobacterium sibiricum (strain DSM 17290 / CCUG 55495 / CIP 109462 / JCM 13490 / 255-15)</name>
    <dbReference type="NCBI Taxonomy" id="262543"/>
    <lineage>
        <taxon>Bacteria</taxon>
        <taxon>Bacillati</taxon>
        <taxon>Bacillota</taxon>
        <taxon>Bacilli</taxon>
        <taxon>Bacillales</taxon>
        <taxon>Bacillales Family XII. Incertae Sedis</taxon>
        <taxon>Exiguobacterium</taxon>
    </lineage>
</organism>
<evidence type="ECO:0000255" key="1">
    <source>
        <dbReference type="HAMAP-Rule" id="MF_01420"/>
    </source>
</evidence>
<accession>B1YLE8</accession>
<reference key="1">
    <citation type="submission" date="2008-04" db="EMBL/GenBank/DDBJ databases">
        <title>Complete sequence of chromosome of Exiguobacterium sibiricum 255-15.</title>
        <authorList>
            <consortium name="US DOE Joint Genome Institute"/>
            <person name="Copeland A."/>
            <person name="Lucas S."/>
            <person name="Lapidus A."/>
            <person name="Glavina del Rio T."/>
            <person name="Dalin E."/>
            <person name="Tice H."/>
            <person name="Bruce D."/>
            <person name="Goodwin L."/>
            <person name="Pitluck S."/>
            <person name="Kiss H."/>
            <person name="Chertkov O."/>
            <person name="Monk C."/>
            <person name="Brettin T."/>
            <person name="Detter J.C."/>
            <person name="Han C."/>
            <person name="Kuske C.R."/>
            <person name="Schmutz J."/>
            <person name="Larimer F."/>
            <person name="Land M."/>
            <person name="Hauser L."/>
            <person name="Kyrpides N."/>
            <person name="Mikhailova N."/>
            <person name="Vishnivetskaya T."/>
            <person name="Rodrigues D.F."/>
            <person name="Gilichinsky D."/>
            <person name="Tiedje J."/>
            <person name="Richardson P."/>
        </authorList>
    </citation>
    <scope>NUCLEOTIDE SEQUENCE [LARGE SCALE GENOMIC DNA]</scope>
    <source>
        <strain>DSM 17290 / CCUG 55495 / CIP 109462 / JCM 13490 / 255-15</strain>
    </source>
</reference>
<gene>
    <name evidence="1" type="primary">whiA</name>
    <name type="ordered locus">Exig_2403</name>
</gene>
<keyword id="KW-0131">Cell cycle</keyword>
<keyword id="KW-0132">Cell division</keyword>
<keyword id="KW-0238">DNA-binding</keyword>
<keyword id="KW-1185">Reference proteome</keyword>
<dbReference type="EMBL" id="CP001022">
    <property type="protein sequence ID" value="ACB61853.1"/>
    <property type="molecule type" value="Genomic_DNA"/>
</dbReference>
<dbReference type="RefSeq" id="WP_012371269.1">
    <property type="nucleotide sequence ID" value="NC_010556.1"/>
</dbReference>
<dbReference type="SMR" id="B1YLE8"/>
<dbReference type="STRING" id="262543.Exig_2403"/>
<dbReference type="KEGG" id="esi:Exig_2403"/>
<dbReference type="eggNOG" id="COG1481">
    <property type="taxonomic scope" value="Bacteria"/>
</dbReference>
<dbReference type="HOGENOM" id="CLU_053282_0_0_9"/>
<dbReference type="OrthoDB" id="401278at2"/>
<dbReference type="Proteomes" id="UP000001681">
    <property type="component" value="Chromosome"/>
</dbReference>
<dbReference type="GO" id="GO:0003677">
    <property type="term" value="F:DNA binding"/>
    <property type="evidence" value="ECO:0007669"/>
    <property type="project" value="UniProtKB-UniRule"/>
</dbReference>
<dbReference type="GO" id="GO:0051301">
    <property type="term" value="P:cell division"/>
    <property type="evidence" value="ECO:0007669"/>
    <property type="project" value="UniProtKB-UniRule"/>
</dbReference>
<dbReference type="GO" id="GO:0043937">
    <property type="term" value="P:regulation of sporulation"/>
    <property type="evidence" value="ECO:0007669"/>
    <property type="project" value="InterPro"/>
</dbReference>
<dbReference type="FunFam" id="3.10.28.10:FF:000002">
    <property type="entry name" value="Probable cell division protein WhiA"/>
    <property type="match status" value="1"/>
</dbReference>
<dbReference type="Gene3D" id="3.10.28.10">
    <property type="entry name" value="Homing endonucleases"/>
    <property type="match status" value="1"/>
</dbReference>
<dbReference type="HAMAP" id="MF_01420">
    <property type="entry name" value="HTH_type_WhiA"/>
    <property type="match status" value="1"/>
</dbReference>
<dbReference type="InterPro" id="IPR027434">
    <property type="entry name" value="Homing_endonucl"/>
</dbReference>
<dbReference type="InterPro" id="IPR018478">
    <property type="entry name" value="Sporu_reg_WhiA_N_dom"/>
</dbReference>
<dbReference type="InterPro" id="IPR003802">
    <property type="entry name" value="Sporulation_regulator_WhiA"/>
</dbReference>
<dbReference type="InterPro" id="IPR023054">
    <property type="entry name" value="Sporulation_regulator_WhiA_C"/>
</dbReference>
<dbReference type="InterPro" id="IPR039518">
    <property type="entry name" value="WhiA_LAGLIDADG_dom"/>
</dbReference>
<dbReference type="NCBIfam" id="TIGR00647">
    <property type="entry name" value="DNA_bind_WhiA"/>
    <property type="match status" value="1"/>
</dbReference>
<dbReference type="PANTHER" id="PTHR37307">
    <property type="entry name" value="CELL DIVISION PROTEIN WHIA-RELATED"/>
    <property type="match status" value="1"/>
</dbReference>
<dbReference type="PANTHER" id="PTHR37307:SF1">
    <property type="entry name" value="CELL DIVISION PROTEIN WHIA-RELATED"/>
    <property type="match status" value="1"/>
</dbReference>
<dbReference type="Pfam" id="PF02650">
    <property type="entry name" value="HTH_WhiA"/>
    <property type="match status" value="1"/>
</dbReference>
<dbReference type="Pfam" id="PF14527">
    <property type="entry name" value="LAGLIDADG_WhiA"/>
    <property type="match status" value="1"/>
</dbReference>
<dbReference type="Pfam" id="PF10298">
    <property type="entry name" value="WhiA_N"/>
    <property type="match status" value="1"/>
</dbReference>
<dbReference type="SUPFAM" id="SSF55608">
    <property type="entry name" value="Homing endonucleases"/>
    <property type="match status" value="1"/>
</dbReference>
<comment type="function">
    <text evidence="1">Involved in cell division and chromosome segregation.</text>
</comment>
<comment type="similarity">
    <text evidence="1">Belongs to the WhiA family.</text>
</comment>
<proteinExistence type="inferred from homology"/>
<sequence length="318" mass="35729">MSFASEVKKELTQIAITDHEMKAELAALARMNGAISFGLGRGLTLDISTENASIARRIYSLLKRAYAVHLDLLVRKKMRLKKNNVYIVRVKQQADKILQDLGILGEGFTMIRSISDSILKDERRARAYLRGAFLAGGSLNNPATSSYHLEIFSLYEEHNAALRSLTNQFDLNAKAIERKKGHILYIKESEKISDFLKLVGATYSMLRFEDVRILKDMRNSVNRLVNCETANLNKTVGAALRQVENIKFLERTVGLDVLPDKLKEIAILRVTHQDVTLQELGEMVESGSISKSGINHRLRKIDQIADKIRNGESMTGAL</sequence>
<feature type="chain" id="PRO_0000376483" description="Probable cell division protein WhiA">
    <location>
        <begin position="1"/>
        <end position="318"/>
    </location>
</feature>
<feature type="DNA-binding region" description="H-T-H motif" evidence="1">
    <location>
        <begin position="276"/>
        <end position="310"/>
    </location>
</feature>